<accession>P03829</accession>
<feature type="chain" id="PRO_0000075399" description="Insertion element iso-IS1N protein InsA">
    <location>
        <begin position="1"/>
        <end position="90"/>
    </location>
</feature>
<evidence type="ECO:0000305" key="1"/>
<gene>
    <name type="primary">insA</name>
</gene>
<comment type="function">
    <text>Absolutely required for transposition of IS1.</text>
</comment>
<comment type="similarity">
    <text evidence="1">Belongs to the IS1 elements InsA family.</text>
</comment>
<reference key="1">
    <citation type="journal article" date="1981" name="Nature">
        <title>Multiple copies of iso-insertion sequences of IS1 in Shigella dysenteriae chromosome.</title>
        <authorList>
            <person name="Ohtsubo H."/>
            <person name="Nyman K."/>
            <person name="Doroszkiewicz W."/>
            <person name="Ohtsubo E."/>
        </authorList>
    </citation>
    <scope>NUCLEOTIDE SEQUENCE [GENOMIC DNA]</scope>
</reference>
<organism>
    <name type="scientific">Shigella dysenteriae</name>
    <dbReference type="NCBI Taxonomy" id="622"/>
    <lineage>
        <taxon>Bacteria</taxon>
        <taxon>Pseudomonadati</taxon>
        <taxon>Pseudomonadota</taxon>
        <taxon>Gammaproteobacteria</taxon>
        <taxon>Enterobacterales</taxon>
        <taxon>Enterobacteriaceae</taxon>
        <taxon>Shigella</taxon>
    </lineage>
</organism>
<keyword id="KW-0233">DNA recombination</keyword>
<keyword id="KW-0814">Transposable element</keyword>
<keyword id="KW-0815">Transposition</keyword>
<name>INA2_SHIDY</name>
<proteinExistence type="inferred from homology"/>
<protein>
    <recommendedName>
        <fullName>Insertion element iso-IS1N protein InsA</fullName>
    </recommendedName>
</protein>
<dbReference type="EMBL" id="J01737">
    <property type="protein sequence ID" value="AAA25031.1"/>
    <property type="molecule type" value="Genomic_DNA"/>
</dbReference>
<dbReference type="PIR" id="A04454">
    <property type="entry name" value="IEEBB9"/>
</dbReference>
<dbReference type="OMA" id="KPRVKGQ"/>
<dbReference type="GO" id="GO:0006313">
    <property type="term" value="P:DNA transposition"/>
    <property type="evidence" value="ECO:0007669"/>
    <property type="project" value="InterPro"/>
</dbReference>
<dbReference type="InterPro" id="IPR024431">
    <property type="entry name" value="InsA_HTH_dom"/>
</dbReference>
<dbReference type="InterPro" id="IPR003220">
    <property type="entry name" value="InsA_N_dom_Znf"/>
</dbReference>
<dbReference type="InterPro" id="IPR051252">
    <property type="entry name" value="IS1_transposase_InsA"/>
</dbReference>
<dbReference type="PANTHER" id="PTHR47923">
    <property type="entry name" value="INSERTION ELEMENT IS1 1 PROTEIN INSA-RELATED"/>
    <property type="match status" value="1"/>
</dbReference>
<dbReference type="PANTHER" id="PTHR47923:SF1">
    <property type="entry name" value="INSERTION ELEMENT IS1 1 PROTEIN INSA-RELATED"/>
    <property type="match status" value="1"/>
</dbReference>
<dbReference type="Pfam" id="PF12759">
    <property type="entry name" value="HTH_Tnp_IS1"/>
    <property type="match status" value="1"/>
</dbReference>
<dbReference type="Pfam" id="PF03811">
    <property type="entry name" value="Zn_ribbon_InsA"/>
    <property type="match status" value="1"/>
</dbReference>
<sequence length="90" mass="10348">MASVNIHCPRCQSAQVYRHGQNPKGHDRFRCRDCHRVFQLTYTYEARKPGIKELITEMAFNGAGVRDTARTLKIGINTVIRTLKNSRQSE</sequence>